<reference key="1">
    <citation type="journal article" date="2009" name="J. Bacteriol.">
        <title>The complete genome sequence of Helicobacter pylori strain G27.</title>
        <authorList>
            <person name="Baltrus D.A."/>
            <person name="Amieva M.R."/>
            <person name="Covacci A."/>
            <person name="Lowe T.M."/>
            <person name="Merrell D.S."/>
            <person name="Ottemann K.M."/>
            <person name="Stein M."/>
            <person name="Salama N.R."/>
            <person name="Guillemin K."/>
        </authorList>
    </citation>
    <scope>NUCLEOTIDE SEQUENCE [LARGE SCALE GENOMIC DNA]</scope>
    <source>
        <strain>G27</strain>
    </source>
</reference>
<comment type="function">
    <text evidence="1">Required for rescue of stalled ribosomes mediated by trans-translation. Binds to transfer-messenger RNA (tmRNA), required for stable association of tmRNA with ribosomes. tmRNA and SmpB together mimic tRNA shape, replacing the anticodon stem-loop with SmpB. tmRNA is encoded by the ssrA gene; the 2 termini fold to resemble tRNA(Ala) and it encodes a 'tag peptide', a short internal open reading frame. During trans-translation Ala-aminoacylated tmRNA acts like a tRNA, entering the A-site of stalled ribosomes, displacing the stalled mRNA. The ribosome then switches to translate the ORF on the tmRNA; the nascent peptide is terminated with the 'tag peptide' encoded by the tmRNA and targeted for degradation. The ribosome is freed to recommence translation, which seems to be the essential function of trans-translation.</text>
</comment>
<comment type="subcellular location">
    <subcellularLocation>
        <location evidence="1">Cytoplasm</location>
    </subcellularLocation>
    <text evidence="1">The tmRNA-SmpB complex associates with stalled 70S ribosomes.</text>
</comment>
<comment type="similarity">
    <text evidence="1">Belongs to the SmpB family.</text>
</comment>
<proteinExistence type="inferred from homology"/>
<name>SSRP_HELPG</name>
<sequence length="152" mass="17824">MKLIASNKKAYFDYEILETLEAGLALLGSEVKALRQTRVNLKDNFVKIIKGEAFLFGVHISYLDTIHAYYKPNERRERKLLLHKKQLLKWQIEASKERLSIVGLKLYFNQRNRAKIQIALVKGKRLHDKRQSLKEKALNKEILADLKHHFKG</sequence>
<gene>
    <name evidence="1" type="primary">smpB</name>
    <name type="ordered locus">HPG27_1366</name>
</gene>
<organism>
    <name type="scientific">Helicobacter pylori (strain G27)</name>
    <dbReference type="NCBI Taxonomy" id="563041"/>
    <lineage>
        <taxon>Bacteria</taxon>
        <taxon>Pseudomonadati</taxon>
        <taxon>Campylobacterota</taxon>
        <taxon>Epsilonproteobacteria</taxon>
        <taxon>Campylobacterales</taxon>
        <taxon>Helicobacteraceae</taxon>
        <taxon>Helicobacter</taxon>
    </lineage>
</organism>
<dbReference type="EMBL" id="CP001173">
    <property type="protein sequence ID" value="ACI28112.1"/>
    <property type="molecule type" value="Genomic_DNA"/>
</dbReference>
<dbReference type="RefSeq" id="WP_000766480.1">
    <property type="nucleotide sequence ID" value="NC_011333.1"/>
</dbReference>
<dbReference type="SMR" id="B5Z963"/>
<dbReference type="KEGG" id="hpg:HPG27_1366"/>
<dbReference type="HOGENOM" id="CLU_108953_3_1_7"/>
<dbReference type="Proteomes" id="UP000001735">
    <property type="component" value="Chromosome"/>
</dbReference>
<dbReference type="GO" id="GO:0005829">
    <property type="term" value="C:cytosol"/>
    <property type="evidence" value="ECO:0007669"/>
    <property type="project" value="TreeGrafter"/>
</dbReference>
<dbReference type="GO" id="GO:0003723">
    <property type="term" value="F:RNA binding"/>
    <property type="evidence" value="ECO:0007669"/>
    <property type="project" value="UniProtKB-UniRule"/>
</dbReference>
<dbReference type="GO" id="GO:0070929">
    <property type="term" value="P:trans-translation"/>
    <property type="evidence" value="ECO:0007669"/>
    <property type="project" value="UniProtKB-UniRule"/>
</dbReference>
<dbReference type="CDD" id="cd09294">
    <property type="entry name" value="SmpB"/>
    <property type="match status" value="1"/>
</dbReference>
<dbReference type="Gene3D" id="2.40.280.10">
    <property type="match status" value="1"/>
</dbReference>
<dbReference type="HAMAP" id="MF_00023">
    <property type="entry name" value="SmpB"/>
    <property type="match status" value="1"/>
</dbReference>
<dbReference type="InterPro" id="IPR023620">
    <property type="entry name" value="SmpB"/>
</dbReference>
<dbReference type="InterPro" id="IPR000037">
    <property type="entry name" value="SsrA-bd_prot"/>
</dbReference>
<dbReference type="InterPro" id="IPR020081">
    <property type="entry name" value="SsrA-bd_prot_CS"/>
</dbReference>
<dbReference type="NCBIfam" id="NF003843">
    <property type="entry name" value="PRK05422.1"/>
    <property type="match status" value="1"/>
</dbReference>
<dbReference type="NCBIfam" id="TIGR00086">
    <property type="entry name" value="smpB"/>
    <property type="match status" value="1"/>
</dbReference>
<dbReference type="PANTHER" id="PTHR30308:SF2">
    <property type="entry name" value="SSRA-BINDING PROTEIN"/>
    <property type="match status" value="1"/>
</dbReference>
<dbReference type="PANTHER" id="PTHR30308">
    <property type="entry name" value="TMRNA-BINDING COMPONENT OF TRANS-TRANSLATION TAGGING COMPLEX"/>
    <property type="match status" value="1"/>
</dbReference>
<dbReference type="Pfam" id="PF01668">
    <property type="entry name" value="SmpB"/>
    <property type="match status" value="1"/>
</dbReference>
<dbReference type="SUPFAM" id="SSF74982">
    <property type="entry name" value="Small protein B (SmpB)"/>
    <property type="match status" value="1"/>
</dbReference>
<dbReference type="PROSITE" id="PS01317">
    <property type="entry name" value="SSRP"/>
    <property type="match status" value="1"/>
</dbReference>
<feature type="chain" id="PRO_1000090155" description="SsrA-binding protein">
    <location>
        <begin position="1"/>
        <end position="152"/>
    </location>
</feature>
<evidence type="ECO:0000255" key="1">
    <source>
        <dbReference type="HAMAP-Rule" id="MF_00023"/>
    </source>
</evidence>
<accession>B5Z963</accession>
<protein>
    <recommendedName>
        <fullName evidence="1">SsrA-binding protein</fullName>
    </recommendedName>
    <alternativeName>
        <fullName evidence="1">Small protein B</fullName>
    </alternativeName>
</protein>
<keyword id="KW-0963">Cytoplasm</keyword>
<keyword id="KW-1185">Reference proteome</keyword>
<keyword id="KW-0694">RNA-binding</keyword>